<feature type="signal peptide" evidence="1">
    <location>
        <begin position="1"/>
        <end position="22"/>
    </location>
</feature>
<feature type="chain" id="PRO_0000038169" description="Envelope glycoprotein B" evidence="1">
    <location>
        <begin position="23"/>
        <end position="917"/>
    </location>
</feature>
<feature type="topological domain" description="Virion surface" evidence="1">
    <location>
        <begin position="23"/>
        <end position="792"/>
    </location>
</feature>
<feature type="transmembrane region" description="Helical" evidence="1">
    <location>
        <begin position="793"/>
        <end position="813"/>
    </location>
</feature>
<feature type="topological domain" description="Intravirion" evidence="1">
    <location>
        <begin position="814"/>
        <end position="917"/>
    </location>
</feature>
<feature type="region of interest" description="Disordered" evidence="2">
    <location>
        <begin position="21"/>
        <end position="117"/>
    </location>
</feature>
<feature type="region of interest" description="Involved in fusion and/or binding to host membrane" evidence="1">
    <location>
        <begin position="196"/>
        <end position="202"/>
    </location>
</feature>
<feature type="region of interest" description="Involved in fusion and/or binding to host membrane" evidence="1">
    <location>
        <begin position="281"/>
        <end position="288"/>
    </location>
</feature>
<feature type="region of interest" description="Hydrophobic membrane proximal region" evidence="1">
    <location>
        <begin position="737"/>
        <end position="790"/>
    </location>
</feature>
<feature type="short sequence motif" description="Golgi targeting" evidence="1">
    <location>
        <begin position="865"/>
        <end position="868"/>
    </location>
</feature>
<feature type="short sequence motif" description="Internalization motif" evidence="1">
    <location>
        <begin position="907"/>
        <end position="910"/>
    </location>
</feature>
<feature type="compositionally biased region" description="Low complexity" evidence="2">
    <location>
        <begin position="21"/>
        <end position="30"/>
    </location>
</feature>
<feature type="compositionally biased region" description="Basic and acidic residues" evidence="2">
    <location>
        <begin position="38"/>
        <end position="49"/>
    </location>
</feature>
<feature type="glycosylation site" description="N-linked (GlcNAc...) asparagine; by host" evidence="1">
    <location>
        <position position="48"/>
    </location>
</feature>
<feature type="glycosylation site" description="N-linked (GlcNAc...) asparagine; by host" evidence="1">
    <location>
        <position position="110"/>
    </location>
</feature>
<feature type="glycosylation site" description="N-linked (GlcNAc...) asparagine; by host" evidence="1">
    <location>
        <position position="164"/>
    </location>
</feature>
<feature type="glycosylation site" description="N-linked (GlcNAc...) asparagine; by host" evidence="1">
    <location>
        <position position="421"/>
    </location>
</feature>
<feature type="glycosylation site" description="N-linked (GlcNAc...) asparagine; by host" evidence="1">
    <location>
        <position position="453"/>
    </location>
</feature>
<feature type="glycosylation site" description="N-linked (GlcNAc...) asparagine; by host" evidence="1">
    <location>
        <position position="505"/>
    </location>
</feature>
<feature type="glycosylation site" description="N-linked (GlcNAc...) asparagine; by host" evidence="1">
    <location>
        <position position="692"/>
    </location>
</feature>
<feature type="disulfide bond" evidence="1">
    <location>
        <begin position="139"/>
        <end position="591"/>
    </location>
</feature>
<feature type="disulfide bond" evidence="1">
    <location>
        <begin position="156"/>
        <end position="547"/>
    </location>
</feature>
<feature type="disulfide bond" evidence="1">
    <location>
        <begin position="230"/>
        <end position="294"/>
    </location>
</feature>
<feature type="disulfide bond" evidence="1">
    <location>
        <begin position="387"/>
        <end position="435"/>
    </location>
</feature>
<feature type="disulfide bond" evidence="1">
    <location>
        <begin position="614"/>
        <end position="651"/>
    </location>
</feature>
<sequence>MAISRRSLHAIILTVLLLAATAAPSQSGSRSRSRRKSERQSTNRGRDNNSIRGGVAQTPESSPLPALDLTPQPPMEKEEPDTLAPRASRDAPGTPKVPAMPGVTPEPSGNASEPADPAELRADLRGLKGSSDDPNFYVCPPPTGATVVRLEEPRPCPELPKGLNFTEGIAVTFKENLAPYKFKATMYYKAVTVASVWSGYSYNQFMNIFEDRAPIPFEEIVDRIHGRGMCLSTAKYVRNNLETTAFHNDADEHEMKLVPAESAPGLHRGWHTTRLKNNPTGSAWIHRHGTTVDCIVDEVEAKSSYPYNEFVLATGDFVYASPFFGYRDGSHSEHNAYAADRFKQVDGFFPRDFGTGRRHGSPVTYNLLTTPMFTVGWNWAPKRPSVCTMTKWREVPEMLRAEYGSSFRFTSNALSATFTTNLTQYSLSRVDLGDCVGKEAREAIDRIYLEKYNNTHLRVGSVQYYLATGGFLIAYQPLLSNNLADLYVKELMREQALKPEERKLNATTDGKVITTTSSVEFARLQFTYNHIQKHVNEMFGRMAVSWCELQNQELTLWNEAKKINPSAIASVTLHRRVSACMLGDVLAISTCVAVPAENVIMQNSMRIPSKPGTCYSRPLLSFKHVDGEELMEGQLGENNEIRLDRDAVEPCSVGHKRYFLFGAGYVYFEEYTYSHQLSRSDITAVSTFIDLNITMLEDHEFVPLEVYTRQEIKDSGLLDYAEVQRRNQLHALRFADIDTVIKADPNAAIFAGLHGFFEGLGDVGRAVGRVVLGVVGGVVATVSGVSSFLSNPFGALAIGLLVLGGLVAAFFAFRYVMRLQRNPMKALYPLTTKDLKHPSEGGGGEEAMEDFDEQKLDEARSMIKYMALVSAMERTKHKAGRRGGTSAILNARLTDMVMRKRGAKPKYEALPETDEDI</sequence>
<protein>
    <recommendedName>
        <fullName evidence="1">Envelope glycoprotein B</fullName>
        <shortName evidence="1">gB</shortName>
    </recommendedName>
</protein>
<keyword id="KW-1015">Disulfide bond</keyword>
<keyword id="KW-0325">Glycoprotein</keyword>
<keyword id="KW-1032">Host cell membrane</keyword>
<keyword id="KW-1039">Host endosome</keyword>
<keyword id="KW-1040">Host Golgi apparatus</keyword>
<keyword id="KW-1043">Host membrane</keyword>
<keyword id="KW-0945">Host-virus interaction</keyword>
<keyword id="KW-0472">Membrane</keyword>
<keyword id="KW-0732">Signal</keyword>
<keyword id="KW-0812">Transmembrane</keyword>
<keyword id="KW-1133">Transmembrane helix</keyword>
<keyword id="KW-1161">Viral attachment to host cell</keyword>
<keyword id="KW-0261">Viral envelope protein</keyword>
<keyword id="KW-0946">Virion</keyword>
<keyword id="KW-1160">Virus entry into host cell</keyword>
<comment type="function">
    <text evidence="1">Envelope glycoprotein that forms spikes at the surface of virion envelope. Essential for the initial attachment to heparan sulfate moieties of the host cell surface proteoglycans. Involved in fusion of viral and cellular membranes leading to virus entry into the host cell. Following initial binding to its host receptors, membrane fusion is mediated by the fusion machinery composed at least of gB and the heterodimer gH/gL. May be involved in the fusion between the virion envelope and the outer nuclear membrane during virion egress.</text>
</comment>
<comment type="subunit">
    <text evidence="1">Homotrimer; disulfide-linked. Binds to heparan sulfate proteoglycans. Interacts with gH/gL heterodimer.</text>
</comment>
<comment type="subcellular location">
    <subcellularLocation>
        <location evidence="1">Virion membrane</location>
        <topology evidence="1">Single-pass type I membrane protein</topology>
    </subcellularLocation>
    <subcellularLocation>
        <location evidence="1">Host cell membrane</location>
        <topology evidence="1">Single-pass type I membrane protein</topology>
    </subcellularLocation>
    <subcellularLocation>
        <location evidence="1">Host endosome membrane</location>
        <topology evidence="1">Single-pass type I membrane protein</topology>
    </subcellularLocation>
    <subcellularLocation>
        <location evidence="1">Host Golgi apparatus membrane</location>
        <topology evidence="1">Single-pass type I membrane protein</topology>
    </subcellularLocation>
    <text evidence="1">During virion morphogenesis, this protein probably accumulates in the endosomes and trans-Golgi where secondary envelopment occurs. It is probably transported to the cell surface from where it is endocytosed and directed to the trans-Golgi network (TGN).</text>
</comment>
<comment type="PTM">
    <text evidence="3">A proteolytic cleavage by host furin generates two subunits that remain linked by disulfide bonds.</text>
</comment>
<comment type="similarity">
    <text evidence="1">Belongs to the herpesviridae glycoprotein B family.</text>
</comment>
<evidence type="ECO:0000255" key="1">
    <source>
        <dbReference type="HAMAP-Rule" id="MF_04032"/>
    </source>
</evidence>
<evidence type="ECO:0000256" key="2">
    <source>
        <dbReference type="SAM" id="MobiDB-lite"/>
    </source>
</evidence>
<evidence type="ECO:0000305" key="3"/>
<organism>
    <name type="scientific">Bovine herpesvirus 2 (strain BMV)</name>
    <name type="common">BoHV-2</name>
    <name type="synonym">Bovine mammillitis virus</name>
    <dbReference type="NCBI Taxonomy" id="10296"/>
    <lineage>
        <taxon>Viruses</taxon>
        <taxon>Duplodnaviria</taxon>
        <taxon>Heunggongvirae</taxon>
        <taxon>Peploviricota</taxon>
        <taxon>Herviviricetes</taxon>
        <taxon>Herpesvirales</taxon>
        <taxon>Orthoherpesviridae</taxon>
        <taxon>Alphaherpesvirinae</taxon>
        <taxon>Simplexvirus</taxon>
        <taxon>Simplexvirus bovinealpha2</taxon>
    </lineage>
</organism>
<proteinExistence type="inferred from homology"/>
<accession>P12641</accession>
<gene>
    <name evidence="1" type="primary">gB</name>
</gene>
<name>GB_BHV2B</name>
<organismHost>
    <name type="scientific">Bos taurus</name>
    <name type="common">Bovine</name>
    <dbReference type="NCBI Taxonomy" id="9913"/>
</organismHost>
<reference key="1">
    <citation type="journal article" date="1988" name="Virology">
        <title>Conservation of a gene cluster including glycoprotein B in bovine herpesvirus type 2 (BHV-2) and herpes simplex virus type 1 (HSV-1).</title>
        <authorList>
            <person name="Hammerschmidt W."/>
            <person name="Conraths F."/>
            <person name="Mankertz J."/>
            <person name="Pauli G."/>
            <person name="Ludwig H."/>
            <person name="Buhk H.-J."/>
        </authorList>
    </citation>
    <scope>NUCLEOTIDE SEQUENCE [GENOMIC DNA]</scope>
</reference>
<reference key="2">
    <citation type="journal article" date="1988" name="Virology">
        <title>Common epitopes of glycoprotein B map within the major DNA-binding proteins of bovine herpesvirus type 2 (BHV-2) and herpes simplex virus type 1 (HSV-1).</title>
        <authorList>
            <person name="Hammerschmidt W."/>
            <person name="Conraths F."/>
            <person name="Mankertz J."/>
            <person name="Buhk H.-J."/>
            <person name="Pauli G."/>
            <person name="Ludwig H."/>
        </authorList>
    </citation>
    <scope>NUCLEOTIDE SEQUENCE [GENOMIC DNA] OF 1-200</scope>
</reference>
<dbReference type="EMBL" id="M21628">
    <property type="protein sequence ID" value="AAA46053.1"/>
    <property type="molecule type" value="Genomic_DNA"/>
</dbReference>
<dbReference type="EMBL" id="AH002369">
    <property type="protein sequence ID" value="AAA46052.1"/>
    <property type="molecule type" value="Genomic_DNA"/>
</dbReference>
<dbReference type="PIR" id="C29242">
    <property type="entry name" value="VGBEBH"/>
</dbReference>
<dbReference type="SMR" id="P12641"/>
<dbReference type="GlyCosmos" id="P12641">
    <property type="glycosylation" value="7 sites, No reported glycans"/>
</dbReference>
<dbReference type="Proteomes" id="UP000243283">
    <property type="component" value="Genome"/>
</dbReference>
<dbReference type="GO" id="GO:0044175">
    <property type="term" value="C:host cell endosome membrane"/>
    <property type="evidence" value="ECO:0007669"/>
    <property type="project" value="UniProtKB-SubCell"/>
</dbReference>
<dbReference type="GO" id="GO:0044178">
    <property type="term" value="C:host cell Golgi membrane"/>
    <property type="evidence" value="ECO:0007669"/>
    <property type="project" value="UniProtKB-SubCell"/>
</dbReference>
<dbReference type="GO" id="GO:0020002">
    <property type="term" value="C:host cell plasma membrane"/>
    <property type="evidence" value="ECO:0007669"/>
    <property type="project" value="UniProtKB-SubCell"/>
</dbReference>
<dbReference type="GO" id="GO:0016020">
    <property type="term" value="C:membrane"/>
    <property type="evidence" value="ECO:0007669"/>
    <property type="project" value="UniProtKB-KW"/>
</dbReference>
<dbReference type="GO" id="GO:0019031">
    <property type="term" value="C:viral envelope"/>
    <property type="evidence" value="ECO:0007669"/>
    <property type="project" value="UniProtKB-KW"/>
</dbReference>
<dbReference type="GO" id="GO:0055036">
    <property type="term" value="C:virion membrane"/>
    <property type="evidence" value="ECO:0007669"/>
    <property type="project" value="UniProtKB-SubCell"/>
</dbReference>
<dbReference type="GO" id="GO:0046718">
    <property type="term" value="P:symbiont entry into host cell"/>
    <property type="evidence" value="ECO:0007669"/>
    <property type="project" value="UniProtKB-KW"/>
</dbReference>
<dbReference type="GO" id="GO:0019062">
    <property type="term" value="P:virion attachment to host cell"/>
    <property type="evidence" value="ECO:0007669"/>
    <property type="project" value="UniProtKB-KW"/>
</dbReference>
<dbReference type="FunFam" id="2.30.30.1230:FF:000001">
    <property type="entry name" value="Envelope glycoprotein B"/>
    <property type="match status" value="1"/>
</dbReference>
<dbReference type="FunFam" id="6.10.250.3280:FF:000001">
    <property type="entry name" value="Envelope glycoprotein B"/>
    <property type="match status" value="1"/>
</dbReference>
<dbReference type="Gene3D" id="1.20.5.1890">
    <property type="match status" value="1"/>
</dbReference>
<dbReference type="Gene3D" id="2.30.29.100">
    <property type="match status" value="1"/>
</dbReference>
<dbReference type="Gene3D" id="2.30.30.1230">
    <property type="match status" value="1"/>
</dbReference>
<dbReference type="Gene3D" id="6.10.250.3280">
    <property type="match status" value="1"/>
</dbReference>
<dbReference type="HAMAP" id="MF_04032">
    <property type="entry name" value="HSV_GB"/>
    <property type="match status" value="1"/>
</dbReference>
<dbReference type="InterPro" id="IPR035377">
    <property type="entry name" value="Glycoprot_B_PH1"/>
</dbReference>
<dbReference type="InterPro" id="IPR035381">
    <property type="entry name" value="Glycoprot_B_PH2"/>
</dbReference>
<dbReference type="InterPro" id="IPR038631">
    <property type="entry name" value="Glycoprot_B_PH2_sf"/>
</dbReference>
<dbReference type="InterPro" id="IPR055341">
    <property type="entry name" value="Glycoprotein_B_ecto_C"/>
</dbReference>
<dbReference type="InterPro" id="IPR000234">
    <property type="entry name" value="Herpes_Glycoprot_B"/>
</dbReference>
<dbReference type="Pfam" id="PF17416">
    <property type="entry name" value="Glycoprot_B_PH1"/>
    <property type="match status" value="1"/>
</dbReference>
<dbReference type="Pfam" id="PF17417">
    <property type="entry name" value="Glycoprot_B_PH2"/>
    <property type="match status" value="1"/>
</dbReference>
<dbReference type="Pfam" id="PF00606">
    <property type="entry name" value="Glycoprotein_B"/>
    <property type="match status" value="1"/>
</dbReference>
<dbReference type="SUPFAM" id="SSF161008">
    <property type="entry name" value="Viral glycoprotein ectodomain-like"/>
    <property type="match status" value="1"/>
</dbReference>